<protein>
    <recommendedName>
        <fullName>Cytolethal distending toxin subunit B homolog</fullName>
        <shortName>CDT B</shortName>
    </recommendedName>
    <alternativeName>
        <fullName>Deoxyribonuclease CdtB</fullName>
        <ecNumber>3.1.-.-</ecNumber>
    </alternativeName>
</protein>
<gene>
    <name type="primary">cdtB</name>
    <name type="ordered locus">STY1886</name>
    <name type="ordered locus">t1111</name>
</gene>
<sequence length="269" mass="29560">MKKPVFFLLTMIICSYISFACANISDYKVMTWNLQGSSASTESKWNVNVRQLLSGTAGVDILMVQEAGAVPTSAVPTGRHIQPFGVGIPIDEYTWNLGTTSRQDIRYIYHSAIDVGARRVNLAIVSRQRADNVYVLRPTTVASRPVIGIGLGNDVFLTAHALASGGPDAAAIVRVTINFFRQPQMRHLSWFLAGDFNRSPDRLENDLMTEHLERVVAVLAPTEPTQIGGGILDYGVIVDRAPYSQRVEALRNPQLASDHYPVAFLARSC</sequence>
<keyword id="KW-0002">3D-structure</keyword>
<keyword id="KW-0255">Endonuclease</keyword>
<keyword id="KW-0378">Hydrolase</keyword>
<keyword id="KW-0540">Nuclease</keyword>
<keyword id="KW-0964">Secreted</keyword>
<keyword id="KW-0732">Signal</keyword>
<keyword id="KW-0800">Toxin</keyword>
<keyword id="KW-0843">Virulence</keyword>
<accession>Q8Z6A7</accession>
<accession>Q7CAE0</accession>
<name>CDTB_SALTI</name>
<dbReference type="EC" id="3.1.-.-"/>
<dbReference type="EMBL" id="AL513382">
    <property type="protein sequence ID" value="CAD02120.1"/>
    <property type="molecule type" value="Genomic_DNA"/>
</dbReference>
<dbReference type="EMBL" id="AE014613">
    <property type="protein sequence ID" value="AAO68774.1"/>
    <property type="molecule type" value="Genomic_DNA"/>
</dbReference>
<dbReference type="RefSeq" id="NP_456275.1">
    <property type="nucleotide sequence ID" value="NC_003198.1"/>
</dbReference>
<dbReference type="RefSeq" id="WP_001529135.1">
    <property type="nucleotide sequence ID" value="NZ_WSUR01000044.1"/>
</dbReference>
<dbReference type="PDB" id="4K6L">
    <property type="method" value="X-ray"/>
    <property type="resolution" value="2.39 A"/>
    <property type="chains" value="F=23-269"/>
</dbReference>
<dbReference type="PDB" id="6VX4">
    <property type="method" value="EM"/>
    <property type="resolution" value="3.12 A"/>
    <property type="chains" value="F=23-269"/>
</dbReference>
<dbReference type="PDBsum" id="4K6L"/>
<dbReference type="PDBsum" id="6VX4"/>
<dbReference type="SMR" id="Q8Z6A7"/>
<dbReference type="DIP" id="DIP-60315N"/>
<dbReference type="IntAct" id="Q8Z6A7">
    <property type="interactions" value="3"/>
</dbReference>
<dbReference type="STRING" id="220341.gene:17585814"/>
<dbReference type="KEGG" id="stt:t1111"/>
<dbReference type="KEGG" id="sty:STY1886"/>
<dbReference type="PATRIC" id="fig|220341.7.peg.1901"/>
<dbReference type="eggNOG" id="COG3021">
    <property type="taxonomic scope" value="Bacteria"/>
</dbReference>
<dbReference type="HOGENOM" id="CLU_091266_0_0_6"/>
<dbReference type="OMA" id="IEEYTWN"/>
<dbReference type="OrthoDB" id="9065754at2"/>
<dbReference type="EvolutionaryTrace" id="Q8Z6A7"/>
<dbReference type="PHI-base" id="PHI:9469"/>
<dbReference type="Proteomes" id="UP000000541">
    <property type="component" value="Chromosome"/>
</dbReference>
<dbReference type="Proteomes" id="UP000002670">
    <property type="component" value="Chromosome"/>
</dbReference>
<dbReference type="GO" id="GO:0005576">
    <property type="term" value="C:extracellular region"/>
    <property type="evidence" value="ECO:0007669"/>
    <property type="project" value="UniProtKB-SubCell"/>
</dbReference>
<dbReference type="GO" id="GO:0004519">
    <property type="term" value="F:endonuclease activity"/>
    <property type="evidence" value="ECO:0007669"/>
    <property type="project" value="UniProtKB-KW"/>
</dbReference>
<dbReference type="GO" id="GO:0090729">
    <property type="term" value="F:toxin activity"/>
    <property type="evidence" value="ECO:0007669"/>
    <property type="project" value="UniProtKB-KW"/>
</dbReference>
<dbReference type="CDD" id="cd09081">
    <property type="entry name" value="CdtB"/>
    <property type="match status" value="1"/>
</dbReference>
<dbReference type="Gene3D" id="3.60.10.10">
    <property type="entry name" value="Endonuclease/exonuclease/phosphatase"/>
    <property type="match status" value="1"/>
</dbReference>
<dbReference type="InterPro" id="IPR003539">
    <property type="entry name" value="CD_toxinB"/>
</dbReference>
<dbReference type="InterPro" id="IPR036691">
    <property type="entry name" value="Endo/exonu/phosph_ase_sf"/>
</dbReference>
<dbReference type="InterPro" id="IPR005135">
    <property type="entry name" value="Endo/exonuclease/phosphatase"/>
</dbReference>
<dbReference type="NCBIfam" id="NF011787">
    <property type="entry name" value="PRK15251.1"/>
    <property type="match status" value="1"/>
</dbReference>
<dbReference type="Pfam" id="PF03372">
    <property type="entry name" value="Exo_endo_phos"/>
    <property type="match status" value="1"/>
</dbReference>
<dbReference type="PIRSF" id="PIRSF018539">
    <property type="entry name" value="CDT_B"/>
    <property type="match status" value="1"/>
</dbReference>
<dbReference type="PRINTS" id="PR01388">
    <property type="entry name" value="CDTOXINB"/>
</dbReference>
<dbReference type="SUPFAM" id="SSF56219">
    <property type="entry name" value="DNase I-like"/>
    <property type="match status" value="1"/>
</dbReference>
<dbReference type="PROSITE" id="PS51257">
    <property type="entry name" value="PROKAR_LIPOPROTEIN"/>
    <property type="match status" value="1"/>
</dbReference>
<feature type="signal peptide" evidence="1">
    <location>
        <begin position="1"/>
        <end position="22"/>
    </location>
</feature>
<feature type="chain" id="PRO_0000013374" description="Cytolethal distending toxin subunit B homolog">
    <location>
        <begin position="23"/>
        <end position="269"/>
    </location>
</feature>
<feature type="mutagenesis site" description="Abolishes cytotoxic activity." evidence="2">
    <original>H</original>
    <variation>Q</variation>
    <location>
        <position position="160"/>
    </location>
</feature>
<feature type="mutagenesis site" description="Abolishes cytotoxic activity." evidence="2">
    <original>D</original>
    <variation>S</variation>
    <location>
        <position position="195"/>
    </location>
</feature>
<feature type="strand" evidence="3">
    <location>
        <begin position="29"/>
        <end position="33"/>
    </location>
</feature>
<feature type="strand" evidence="3">
    <location>
        <begin position="37"/>
        <end position="39"/>
    </location>
</feature>
<feature type="helix" evidence="3">
    <location>
        <begin position="43"/>
        <end position="46"/>
    </location>
</feature>
<feature type="helix" evidence="3">
    <location>
        <begin position="48"/>
        <end position="53"/>
    </location>
</feature>
<feature type="strand" evidence="3">
    <location>
        <begin position="60"/>
        <end position="66"/>
    </location>
</feature>
<feature type="strand" evidence="3">
    <location>
        <begin position="84"/>
        <end position="86"/>
    </location>
</feature>
<feature type="strand" evidence="3">
    <location>
        <begin position="91"/>
        <end position="94"/>
    </location>
</feature>
<feature type="strand" evidence="3">
    <location>
        <begin position="100"/>
        <end position="102"/>
    </location>
</feature>
<feature type="strand" evidence="3">
    <location>
        <begin position="107"/>
        <end position="110"/>
    </location>
</feature>
<feature type="strand" evidence="3">
    <location>
        <begin position="115"/>
        <end position="117"/>
    </location>
</feature>
<feature type="strand" evidence="3">
    <location>
        <begin position="123"/>
        <end position="128"/>
    </location>
</feature>
<feature type="strand" evidence="3">
    <location>
        <begin position="131"/>
        <end position="136"/>
    </location>
</feature>
<feature type="strand" evidence="3">
    <location>
        <begin position="139"/>
        <end position="143"/>
    </location>
</feature>
<feature type="strand" evidence="3">
    <location>
        <begin position="146"/>
        <end position="151"/>
    </location>
</feature>
<feature type="strand" evidence="3">
    <location>
        <begin position="154"/>
        <end position="158"/>
    </location>
</feature>
<feature type="turn" evidence="3">
    <location>
        <begin position="163"/>
        <end position="165"/>
    </location>
</feature>
<feature type="helix" evidence="3">
    <location>
        <begin position="169"/>
        <end position="180"/>
    </location>
</feature>
<feature type="strand" evidence="3">
    <location>
        <begin position="186"/>
        <end position="195"/>
    </location>
</feature>
<feature type="helix" evidence="3">
    <location>
        <begin position="200"/>
        <end position="206"/>
    </location>
</feature>
<feature type="strand" evidence="3">
    <location>
        <begin position="216"/>
        <end position="219"/>
    </location>
</feature>
<feature type="strand" evidence="3">
    <location>
        <begin position="225"/>
        <end position="229"/>
    </location>
</feature>
<feature type="strand" evidence="3">
    <location>
        <begin position="233"/>
        <end position="241"/>
    </location>
</feature>
<feature type="helix" evidence="3">
    <location>
        <begin position="244"/>
        <end position="246"/>
    </location>
</feature>
<feature type="strand" evidence="3">
    <location>
        <begin position="247"/>
        <end position="251"/>
    </location>
</feature>
<feature type="strand" evidence="3">
    <location>
        <begin position="256"/>
        <end position="259"/>
    </location>
</feature>
<feature type="strand" evidence="3">
    <location>
        <begin position="262"/>
        <end position="266"/>
    </location>
</feature>
<comment type="function">
    <text>Produces a CDT (cytolethal distending toxin) activity, which causes DNA damage in intoxicated cells. This damage induces G2/M cell cycle arrest, chromatin fragmentation, cell distention and nucleus enlargement.</text>
</comment>
<comment type="subcellular location">
    <subcellularLocation>
        <location>Secreted</location>
    </subcellularLocation>
    <text>Localized to the nucleus of infected cells.</text>
</comment>
<comment type="induction">
    <text>Expressed only on infection of host cells.</text>
</comment>
<comment type="miscellaneous">
    <text>Unlike other pathogens possessing a CDT activity, S.typhi does not encode CdtA and CdtC (that form a heterodimeric subunit), which are required for the delivery of CdtB. It means that the CDT activity of S.typhi is strictly dependent on CdtB. Both CDT activity and expression of CdtB require S.typhi internalization into host cells.</text>
</comment>
<comment type="miscellaneous">
    <text>S.typhi is the only Salmonella serovar that encodes cdtB.</text>
</comment>
<proteinExistence type="evidence at protein level"/>
<evidence type="ECO:0000255" key="1">
    <source>
        <dbReference type="PROSITE-ProRule" id="PRU00303"/>
    </source>
</evidence>
<evidence type="ECO:0000269" key="2">
    <source>
    </source>
</evidence>
<evidence type="ECO:0007829" key="3">
    <source>
        <dbReference type="PDB" id="6VX4"/>
    </source>
</evidence>
<organism>
    <name type="scientific">Salmonella typhi</name>
    <dbReference type="NCBI Taxonomy" id="90370"/>
    <lineage>
        <taxon>Bacteria</taxon>
        <taxon>Pseudomonadati</taxon>
        <taxon>Pseudomonadota</taxon>
        <taxon>Gammaproteobacteria</taxon>
        <taxon>Enterobacterales</taxon>
        <taxon>Enterobacteriaceae</taxon>
        <taxon>Salmonella</taxon>
    </lineage>
</organism>
<reference key="1">
    <citation type="journal article" date="2001" name="Nature">
        <title>Complete genome sequence of a multiple drug resistant Salmonella enterica serovar Typhi CT18.</title>
        <authorList>
            <person name="Parkhill J."/>
            <person name="Dougan G."/>
            <person name="James K.D."/>
            <person name="Thomson N.R."/>
            <person name="Pickard D."/>
            <person name="Wain J."/>
            <person name="Churcher C.M."/>
            <person name="Mungall K.L."/>
            <person name="Bentley S.D."/>
            <person name="Holden M.T.G."/>
            <person name="Sebaihia M."/>
            <person name="Baker S."/>
            <person name="Basham D."/>
            <person name="Brooks K."/>
            <person name="Chillingworth T."/>
            <person name="Connerton P."/>
            <person name="Cronin A."/>
            <person name="Davis P."/>
            <person name="Davies R.M."/>
            <person name="Dowd L."/>
            <person name="White N."/>
            <person name="Farrar J."/>
            <person name="Feltwell T."/>
            <person name="Hamlin N."/>
            <person name="Haque A."/>
            <person name="Hien T.T."/>
            <person name="Holroyd S."/>
            <person name="Jagels K."/>
            <person name="Krogh A."/>
            <person name="Larsen T.S."/>
            <person name="Leather S."/>
            <person name="Moule S."/>
            <person name="O'Gaora P."/>
            <person name="Parry C."/>
            <person name="Quail M.A."/>
            <person name="Rutherford K.M."/>
            <person name="Simmonds M."/>
            <person name="Skelton J."/>
            <person name="Stevens K."/>
            <person name="Whitehead S."/>
            <person name="Barrell B.G."/>
        </authorList>
    </citation>
    <scope>NUCLEOTIDE SEQUENCE [LARGE SCALE GENOMIC DNA]</scope>
    <source>
        <strain>CT18</strain>
    </source>
</reference>
<reference key="2">
    <citation type="journal article" date="2003" name="J. Bacteriol.">
        <title>Comparative genomics of Salmonella enterica serovar Typhi strains Ty2 and CT18.</title>
        <authorList>
            <person name="Deng W."/>
            <person name="Liou S.-R."/>
            <person name="Plunkett G. III"/>
            <person name="Mayhew G.F."/>
            <person name="Rose D.J."/>
            <person name="Burland V."/>
            <person name="Kodoyianni V."/>
            <person name="Schwartz D.C."/>
            <person name="Blattner F.R."/>
        </authorList>
    </citation>
    <scope>NUCLEOTIDE SEQUENCE [LARGE SCALE GENOMIC DNA]</scope>
    <source>
        <strain>ATCC 700931 / Ty2</strain>
    </source>
</reference>
<reference key="3">
    <citation type="journal article" date="2004" name="Proc. Natl. Acad. Sci. U.S.A.">
        <title>Salmonella typhi encodes a functional cytolethal distending toxin that is delivered into host cells by a bacterial-internalization pathway.</title>
        <authorList>
            <person name="Haghjoo E."/>
            <person name="Galan J.E."/>
        </authorList>
    </citation>
    <scope>CHARACTERIZATION OF THE TOXIC ACTIVITY</scope>
    <scope>MUTAGENESIS OF HIS-160 AND ASP-195</scope>
    <source>
        <strain>ISP2825</strain>
    </source>
</reference>